<proteinExistence type="inferred from homology"/>
<protein>
    <recommendedName>
        <fullName>Uncharacterized protein YeeT</fullName>
    </recommendedName>
</protein>
<gene>
    <name type="primary">yeeT</name>
    <name type="ordered locus">Z3163</name>
    <name type="ordered locus">ECs2804</name>
</gene>
<organism>
    <name type="scientific">Escherichia coli O157:H7</name>
    <dbReference type="NCBI Taxonomy" id="83334"/>
    <lineage>
        <taxon>Bacteria</taxon>
        <taxon>Pseudomonadati</taxon>
        <taxon>Pseudomonadota</taxon>
        <taxon>Gammaproteobacteria</taxon>
        <taxon>Enterobacterales</taxon>
        <taxon>Enterobacteriaceae</taxon>
        <taxon>Escherichia</taxon>
    </lineage>
</organism>
<sequence length="73" mass="8411">MKIITRGEAMRIHQQHPTSRLFPFCTGKYRWHGSAEAYTGREVQDIPGVLAVFAERRKDSFGPYVRLMSVTLN</sequence>
<name>YEET_ECO57</name>
<comment type="similarity">
    <text evidence="1">Belongs to the YeeT/YkfH/YpjJ family.</text>
</comment>
<keyword id="KW-1185">Reference proteome</keyword>
<feature type="chain" id="PRO_0000169113" description="Uncharacterized protein YeeT">
    <location>
        <begin position="1"/>
        <end position="73"/>
    </location>
</feature>
<dbReference type="EMBL" id="AE005174">
    <property type="protein sequence ID" value="AAG57061.1"/>
    <property type="molecule type" value="Genomic_DNA"/>
</dbReference>
<dbReference type="EMBL" id="BA000007">
    <property type="protein sequence ID" value="BAB36227.1"/>
    <property type="molecule type" value="Genomic_DNA"/>
</dbReference>
<dbReference type="PIR" id="A85825">
    <property type="entry name" value="A85825"/>
</dbReference>
<dbReference type="PIR" id="D90979">
    <property type="entry name" value="D90979"/>
</dbReference>
<dbReference type="RefSeq" id="NP_310831.1">
    <property type="nucleotide sequence ID" value="NC_002695.1"/>
</dbReference>
<dbReference type="RefSeq" id="WP_000692323.1">
    <property type="nucleotide sequence ID" value="NZ_VOAI01000013.1"/>
</dbReference>
<dbReference type="STRING" id="155864.Z3163"/>
<dbReference type="GeneID" id="912759"/>
<dbReference type="KEGG" id="ece:Z3163"/>
<dbReference type="KEGG" id="ecs:ECs_2804"/>
<dbReference type="PATRIC" id="fig|386585.9.peg.2939"/>
<dbReference type="eggNOG" id="ENOG50333DH">
    <property type="taxonomic scope" value="Bacteria"/>
</dbReference>
<dbReference type="HOGENOM" id="CLU_201031_0_0_6"/>
<dbReference type="OMA" id="GEAMHIH"/>
<dbReference type="Proteomes" id="UP000000558">
    <property type="component" value="Chromosome"/>
</dbReference>
<dbReference type="Proteomes" id="UP000002519">
    <property type="component" value="Chromosome"/>
</dbReference>
<dbReference type="InterPro" id="IPR009329">
    <property type="entry name" value="DUF987"/>
</dbReference>
<dbReference type="Pfam" id="PF06174">
    <property type="entry name" value="DUF987"/>
    <property type="match status" value="1"/>
</dbReference>
<reference key="1">
    <citation type="journal article" date="2001" name="Nature">
        <title>Genome sequence of enterohaemorrhagic Escherichia coli O157:H7.</title>
        <authorList>
            <person name="Perna N.T."/>
            <person name="Plunkett G. III"/>
            <person name="Burland V."/>
            <person name="Mau B."/>
            <person name="Glasner J.D."/>
            <person name="Rose D.J."/>
            <person name="Mayhew G.F."/>
            <person name="Evans P.S."/>
            <person name="Gregor J."/>
            <person name="Kirkpatrick H.A."/>
            <person name="Posfai G."/>
            <person name="Hackett J."/>
            <person name="Klink S."/>
            <person name="Boutin A."/>
            <person name="Shao Y."/>
            <person name="Miller L."/>
            <person name="Grotbeck E.J."/>
            <person name="Davis N.W."/>
            <person name="Lim A."/>
            <person name="Dimalanta E.T."/>
            <person name="Potamousis K."/>
            <person name="Apodaca J."/>
            <person name="Anantharaman T.S."/>
            <person name="Lin J."/>
            <person name="Yen G."/>
            <person name="Schwartz D.C."/>
            <person name="Welch R.A."/>
            <person name="Blattner F.R."/>
        </authorList>
    </citation>
    <scope>NUCLEOTIDE SEQUENCE [LARGE SCALE GENOMIC DNA]</scope>
    <source>
        <strain>O157:H7 / EDL933 / ATCC 700927 / EHEC</strain>
    </source>
</reference>
<reference key="2">
    <citation type="journal article" date="2001" name="DNA Res.">
        <title>Complete genome sequence of enterohemorrhagic Escherichia coli O157:H7 and genomic comparison with a laboratory strain K-12.</title>
        <authorList>
            <person name="Hayashi T."/>
            <person name="Makino K."/>
            <person name="Ohnishi M."/>
            <person name="Kurokawa K."/>
            <person name="Ishii K."/>
            <person name="Yokoyama K."/>
            <person name="Han C.-G."/>
            <person name="Ohtsubo E."/>
            <person name="Nakayama K."/>
            <person name="Murata T."/>
            <person name="Tanaka M."/>
            <person name="Tobe T."/>
            <person name="Iida T."/>
            <person name="Takami H."/>
            <person name="Honda T."/>
            <person name="Sasakawa C."/>
            <person name="Ogasawara N."/>
            <person name="Yasunaga T."/>
            <person name="Kuhara S."/>
            <person name="Shiba T."/>
            <person name="Hattori M."/>
            <person name="Shinagawa H."/>
        </authorList>
    </citation>
    <scope>NUCLEOTIDE SEQUENCE [LARGE SCALE GENOMIC DNA]</scope>
    <source>
        <strain>O157:H7 / Sakai / RIMD 0509952 / EHEC</strain>
    </source>
</reference>
<accession>P64523</accession>
<accession>P76363</accession>
<evidence type="ECO:0000305" key="1"/>